<name>CAPP_STRCO</name>
<sequence length="911" mass="101297">MSSADDQTTTTTSSELRADIRRLGDLLGETLVRQEGPELLELVEKVRRLTREDGEAAAELLRGTELETAAKLVRAFSTYFHLANVTEQVHRGRELGAKRAAEGGLLARTADRLKDADPEHLRETVRNLNVRPVFTAHPTEAARRSVLNKLRRIAALLDTPVNESDRRRLDTRLAENIDLVWQTDELRVVRPEPADEARNAIYYLDELHLGAVGDVLEDLTAELERAGVKLPDDTRPLTFGTWIGGDRDGNPNVTPQVTWDVLILQHEHGINDALEMIDELRGFLSNSIRYAGATEELLASLQADLERLPEISPRYKRLNAEEPYRLKATCIRQKLENTKQRLAKGTPHEDGRDYLGTAQLIDDLRIVQTSLREHRGGLFADGRLARTIRTLAAFGLQLATMDVREHADAHHHALGQLFDRLGEESWRYADMPREYRTKLLAKELRSRRPLAPSPAPVDAPGEKTLGVFQTVRRALEVFGPEVIESYIISMCQGADDVFAAAVLAREAGLIDLHAGWAKIGIVPLLETTDELKAADTILEDLLADPSYRRLVALRGDVQEVMLGYSDSSKFGGITTSQWEIHRAQRRLRDVAHRYGVRLRLFHGRGGTVGRGGGPTHDAILAQPWGTLEGEIKVTEQGEVISDKYLIPALARENLELTVAATLQASALHTAPRQSDEALARWDAAMDVVSDAAHTAYRHLVEDPDLPTYFLASTPVDQLADLHLGSRPSRRPGSGVSLDGLRAIPWVFGWTQSRQIVPGWYGVGSGLKALREAGLDTVLDEMHQQWHFFRNFISNVEMTLAKTDLRIAQHYVDTLVPDELKHVFDTIKAEHELTVAEVLRVTGESELLDADPVLKQTFTIRDAYLDPISYLQVALLGRQREAAAANEDPDPLLARALLLTVNGVAAGLRNTG</sequence>
<gene>
    <name evidence="1" type="primary">ppc</name>
    <name type="ordered locus">SCO3127</name>
    <name type="ORF">SCE66.06c</name>
</gene>
<feature type="chain" id="PRO_0000166628" description="Phosphoenolpyruvate carboxylase">
    <location>
        <begin position="1"/>
        <end position="911"/>
    </location>
</feature>
<feature type="active site" evidence="1">
    <location>
        <position position="137"/>
    </location>
</feature>
<feature type="active site" evidence="1">
    <location>
        <position position="569"/>
    </location>
</feature>
<keyword id="KW-0120">Carbon dioxide fixation</keyword>
<keyword id="KW-0903">Direct protein sequencing</keyword>
<keyword id="KW-0456">Lyase</keyword>
<keyword id="KW-0460">Magnesium</keyword>
<keyword id="KW-1185">Reference proteome</keyword>
<accession>Q9RNU9</accession>
<organism>
    <name type="scientific">Streptomyces coelicolor (strain ATCC BAA-471 / A3(2) / M145)</name>
    <dbReference type="NCBI Taxonomy" id="100226"/>
    <lineage>
        <taxon>Bacteria</taxon>
        <taxon>Bacillati</taxon>
        <taxon>Actinomycetota</taxon>
        <taxon>Actinomycetes</taxon>
        <taxon>Kitasatosporales</taxon>
        <taxon>Streptomycetaceae</taxon>
        <taxon>Streptomyces</taxon>
        <taxon>Streptomyces albidoflavus group</taxon>
    </lineage>
</organism>
<proteinExistence type="evidence at protein level"/>
<evidence type="ECO:0000255" key="1">
    <source>
        <dbReference type="HAMAP-Rule" id="MF_00595"/>
    </source>
</evidence>
<reference key="1">
    <citation type="journal article" date="1993" name="Biochem. J.">
        <title>Phosphoenolpyruvate carboxylase from Streptomyces coelicolor A3(2): purification of the enzyme, cloning of the ppc gene and over-expression of the protein in a streptomycete.</title>
        <authorList>
            <person name="Bramwell H."/>
            <person name="Nimmo H.G."/>
            <person name="Hunter I.S."/>
            <person name="Coggins J.R."/>
        </authorList>
    </citation>
    <scope>PARTIAL NUCLEOTIDE SEQUENCE [GENOMIC DNA]</scope>
    <scope>PARTIAL PROTEIN SEQUENCE</scope>
    <source>
        <strain>A3(2) / NRRL B-16638</strain>
    </source>
</reference>
<reference key="2">
    <citation type="submission" date="1999-08" db="EMBL/GenBank/DDBJ databases">
        <title>The ppc gene of Streptomyces coelicolor A3(2).</title>
        <authorList>
            <person name="Ricketts A.D.J."/>
            <person name="Hunter I.S."/>
        </authorList>
    </citation>
    <scope>NUCLEOTIDE SEQUENCE [GENOMIC DNA]</scope>
    <source>
        <strain>A3(2) / NRRL B-16638</strain>
    </source>
</reference>
<reference key="3">
    <citation type="submission" date="1999-06" db="EMBL/GenBank/DDBJ databases">
        <title>Characterization of the phosphoenolpyruvate carboxylase gene from Streptomyces coelicolor A3(2) and a ppc gene disruption mutant.</title>
        <authorList>
            <person name="Alves A.M.C.R."/>
            <person name="te Poele E."/>
            <person name="White J."/>
            <person name="Bibb M.J."/>
            <person name="Dijkhuizen L."/>
        </authorList>
    </citation>
    <scope>NUCLEOTIDE SEQUENCE [GENOMIC DNA]</scope>
    <source>
        <strain>A3(2) / NRRL B-16638</strain>
    </source>
</reference>
<reference key="4">
    <citation type="journal article" date="2002" name="Nature">
        <title>Complete genome sequence of the model actinomycete Streptomyces coelicolor A3(2).</title>
        <authorList>
            <person name="Bentley S.D."/>
            <person name="Chater K.F."/>
            <person name="Cerdeno-Tarraga A.-M."/>
            <person name="Challis G.L."/>
            <person name="Thomson N.R."/>
            <person name="James K.D."/>
            <person name="Harris D.E."/>
            <person name="Quail M.A."/>
            <person name="Kieser H."/>
            <person name="Harper D."/>
            <person name="Bateman A."/>
            <person name="Brown S."/>
            <person name="Chandra G."/>
            <person name="Chen C.W."/>
            <person name="Collins M."/>
            <person name="Cronin A."/>
            <person name="Fraser A."/>
            <person name="Goble A."/>
            <person name="Hidalgo J."/>
            <person name="Hornsby T."/>
            <person name="Howarth S."/>
            <person name="Huang C.-H."/>
            <person name="Kieser T."/>
            <person name="Larke L."/>
            <person name="Murphy L.D."/>
            <person name="Oliver K."/>
            <person name="O'Neil S."/>
            <person name="Rabbinowitsch E."/>
            <person name="Rajandream M.A."/>
            <person name="Rutherford K.M."/>
            <person name="Rutter S."/>
            <person name="Seeger K."/>
            <person name="Saunders D."/>
            <person name="Sharp S."/>
            <person name="Squares R."/>
            <person name="Squares S."/>
            <person name="Taylor K."/>
            <person name="Warren T."/>
            <person name="Wietzorrek A."/>
            <person name="Woodward J.R."/>
            <person name="Barrell B.G."/>
            <person name="Parkhill J."/>
            <person name="Hopwood D.A."/>
        </authorList>
    </citation>
    <scope>NUCLEOTIDE SEQUENCE [LARGE SCALE GENOMIC DNA]</scope>
    <source>
        <strain>ATCC BAA-471 / A3(2) / M145</strain>
    </source>
</reference>
<protein>
    <recommendedName>
        <fullName evidence="1">Phosphoenolpyruvate carboxylase</fullName>
        <shortName evidence="1">PEPC</shortName>
        <shortName evidence="1">PEPCase</shortName>
        <ecNumber evidence="1">4.1.1.31</ecNumber>
    </recommendedName>
</protein>
<dbReference type="EC" id="4.1.1.31" evidence="1"/>
<dbReference type="EMBL" id="AF177946">
    <property type="protein sequence ID" value="AAD53311.1"/>
    <property type="molecule type" value="Genomic_DNA"/>
</dbReference>
<dbReference type="EMBL" id="AF160253">
    <property type="protein sequence ID" value="AAM54458.1"/>
    <property type="molecule type" value="Genomic_DNA"/>
</dbReference>
<dbReference type="EMBL" id="AL939115">
    <property type="protein sequence ID" value="CAB95920.1"/>
    <property type="molecule type" value="Genomic_DNA"/>
</dbReference>
<dbReference type="RefSeq" id="NP_627344.1">
    <property type="nucleotide sequence ID" value="NC_003888.3"/>
</dbReference>
<dbReference type="RefSeq" id="WP_003975687.1">
    <property type="nucleotide sequence ID" value="NZ_VNID01000013.1"/>
</dbReference>
<dbReference type="SMR" id="Q9RNU9"/>
<dbReference type="STRING" id="100226.gene:17760744"/>
<dbReference type="PaxDb" id="100226-SCO3127"/>
<dbReference type="GeneID" id="91385862"/>
<dbReference type="KEGG" id="sco:SCO3127"/>
<dbReference type="PATRIC" id="fig|100226.15.peg.3191"/>
<dbReference type="eggNOG" id="COG2352">
    <property type="taxonomic scope" value="Bacteria"/>
</dbReference>
<dbReference type="HOGENOM" id="CLU_006557_2_0_11"/>
<dbReference type="InParanoid" id="Q9RNU9"/>
<dbReference type="OrthoDB" id="9768133at2"/>
<dbReference type="PhylomeDB" id="Q9RNU9"/>
<dbReference type="Proteomes" id="UP000001973">
    <property type="component" value="Chromosome"/>
</dbReference>
<dbReference type="GO" id="GO:0005829">
    <property type="term" value="C:cytosol"/>
    <property type="evidence" value="ECO:0000318"/>
    <property type="project" value="GO_Central"/>
</dbReference>
<dbReference type="GO" id="GO:0000287">
    <property type="term" value="F:magnesium ion binding"/>
    <property type="evidence" value="ECO:0007669"/>
    <property type="project" value="UniProtKB-UniRule"/>
</dbReference>
<dbReference type="GO" id="GO:0008964">
    <property type="term" value="F:phosphoenolpyruvate carboxylase activity"/>
    <property type="evidence" value="ECO:0000318"/>
    <property type="project" value="GO_Central"/>
</dbReference>
<dbReference type="GO" id="GO:0015977">
    <property type="term" value="P:carbon fixation"/>
    <property type="evidence" value="ECO:0007669"/>
    <property type="project" value="UniProtKB-UniRule"/>
</dbReference>
<dbReference type="GO" id="GO:0006107">
    <property type="term" value="P:oxaloacetate metabolic process"/>
    <property type="evidence" value="ECO:0007669"/>
    <property type="project" value="UniProtKB-UniRule"/>
</dbReference>
<dbReference type="GO" id="GO:0006099">
    <property type="term" value="P:tricarboxylic acid cycle"/>
    <property type="evidence" value="ECO:0007669"/>
    <property type="project" value="InterPro"/>
</dbReference>
<dbReference type="FunFam" id="1.20.1440.90:FF:000006">
    <property type="entry name" value="Phosphoenolpyruvate carboxylase"/>
    <property type="match status" value="1"/>
</dbReference>
<dbReference type="Gene3D" id="1.20.1440.90">
    <property type="entry name" value="Phosphoenolpyruvate/pyruvate domain"/>
    <property type="match status" value="1"/>
</dbReference>
<dbReference type="HAMAP" id="MF_00595">
    <property type="entry name" value="PEPcase_type1"/>
    <property type="match status" value="1"/>
</dbReference>
<dbReference type="InterPro" id="IPR021135">
    <property type="entry name" value="PEP_COase"/>
</dbReference>
<dbReference type="InterPro" id="IPR022805">
    <property type="entry name" value="PEP_COase_bac/pln-type"/>
</dbReference>
<dbReference type="InterPro" id="IPR018129">
    <property type="entry name" value="PEP_COase_Lys_AS"/>
</dbReference>
<dbReference type="InterPro" id="IPR033129">
    <property type="entry name" value="PEPCASE_His_AS"/>
</dbReference>
<dbReference type="InterPro" id="IPR015813">
    <property type="entry name" value="Pyrv/PenolPyrv_kinase-like_dom"/>
</dbReference>
<dbReference type="NCBIfam" id="NF000584">
    <property type="entry name" value="PRK00009.1"/>
    <property type="match status" value="1"/>
</dbReference>
<dbReference type="PANTHER" id="PTHR30523">
    <property type="entry name" value="PHOSPHOENOLPYRUVATE CARBOXYLASE"/>
    <property type="match status" value="1"/>
</dbReference>
<dbReference type="PANTHER" id="PTHR30523:SF6">
    <property type="entry name" value="PHOSPHOENOLPYRUVATE CARBOXYLASE"/>
    <property type="match status" value="1"/>
</dbReference>
<dbReference type="Pfam" id="PF00311">
    <property type="entry name" value="PEPcase"/>
    <property type="match status" value="1"/>
</dbReference>
<dbReference type="PRINTS" id="PR00150">
    <property type="entry name" value="PEPCARBXLASE"/>
</dbReference>
<dbReference type="SUPFAM" id="SSF51621">
    <property type="entry name" value="Phosphoenolpyruvate/pyruvate domain"/>
    <property type="match status" value="1"/>
</dbReference>
<dbReference type="PROSITE" id="PS00781">
    <property type="entry name" value="PEPCASE_1"/>
    <property type="match status" value="1"/>
</dbReference>
<dbReference type="PROSITE" id="PS00393">
    <property type="entry name" value="PEPCASE_2"/>
    <property type="match status" value="1"/>
</dbReference>
<comment type="function">
    <text evidence="1">Forms oxaloacetate, a four-carbon dicarboxylic acid source for the tricarboxylic acid cycle.</text>
</comment>
<comment type="catalytic activity">
    <reaction evidence="1">
        <text>oxaloacetate + phosphate = phosphoenolpyruvate + hydrogencarbonate</text>
        <dbReference type="Rhea" id="RHEA:28370"/>
        <dbReference type="ChEBI" id="CHEBI:16452"/>
        <dbReference type="ChEBI" id="CHEBI:17544"/>
        <dbReference type="ChEBI" id="CHEBI:43474"/>
        <dbReference type="ChEBI" id="CHEBI:58702"/>
        <dbReference type="EC" id="4.1.1.31"/>
    </reaction>
</comment>
<comment type="cofactor">
    <cofactor evidence="1">
        <name>Mg(2+)</name>
        <dbReference type="ChEBI" id="CHEBI:18420"/>
    </cofactor>
</comment>
<comment type="similarity">
    <text evidence="1">Belongs to the PEPCase type 1 family.</text>
</comment>